<proteinExistence type="inferred from homology"/>
<evidence type="ECO:0000255" key="1">
    <source>
        <dbReference type="HAMAP-Rule" id="MF_00736"/>
    </source>
</evidence>
<evidence type="ECO:0000305" key="2"/>
<dbReference type="EMBL" id="AM260525">
    <property type="protein sequence ID" value="CAK01294.1"/>
    <property type="molecule type" value="Genomic_DNA"/>
</dbReference>
<dbReference type="RefSeq" id="WP_012231471.1">
    <property type="nucleotide sequence ID" value="NC_010161.1"/>
</dbReference>
<dbReference type="SMR" id="A9ISE8"/>
<dbReference type="KEGG" id="btr:BT_0891"/>
<dbReference type="eggNOG" id="COG0080">
    <property type="taxonomic scope" value="Bacteria"/>
</dbReference>
<dbReference type="HOGENOM" id="CLU_074237_2_1_5"/>
<dbReference type="Proteomes" id="UP000001592">
    <property type="component" value="Chromosome"/>
</dbReference>
<dbReference type="GO" id="GO:0022625">
    <property type="term" value="C:cytosolic large ribosomal subunit"/>
    <property type="evidence" value="ECO:0007669"/>
    <property type="project" value="TreeGrafter"/>
</dbReference>
<dbReference type="GO" id="GO:0070180">
    <property type="term" value="F:large ribosomal subunit rRNA binding"/>
    <property type="evidence" value="ECO:0007669"/>
    <property type="project" value="UniProtKB-UniRule"/>
</dbReference>
<dbReference type="GO" id="GO:0003735">
    <property type="term" value="F:structural constituent of ribosome"/>
    <property type="evidence" value="ECO:0007669"/>
    <property type="project" value="InterPro"/>
</dbReference>
<dbReference type="GO" id="GO:0006412">
    <property type="term" value="P:translation"/>
    <property type="evidence" value="ECO:0007669"/>
    <property type="project" value="UniProtKB-UniRule"/>
</dbReference>
<dbReference type="CDD" id="cd00349">
    <property type="entry name" value="Ribosomal_L11"/>
    <property type="match status" value="1"/>
</dbReference>
<dbReference type="FunFam" id="1.10.10.250:FF:000001">
    <property type="entry name" value="50S ribosomal protein L11"/>
    <property type="match status" value="1"/>
</dbReference>
<dbReference type="FunFam" id="3.30.1550.10:FF:000001">
    <property type="entry name" value="50S ribosomal protein L11"/>
    <property type="match status" value="1"/>
</dbReference>
<dbReference type="Gene3D" id="1.10.10.250">
    <property type="entry name" value="Ribosomal protein L11, C-terminal domain"/>
    <property type="match status" value="1"/>
</dbReference>
<dbReference type="Gene3D" id="3.30.1550.10">
    <property type="entry name" value="Ribosomal protein L11/L12, N-terminal domain"/>
    <property type="match status" value="1"/>
</dbReference>
<dbReference type="HAMAP" id="MF_00736">
    <property type="entry name" value="Ribosomal_uL11"/>
    <property type="match status" value="1"/>
</dbReference>
<dbReference type="InterPro" id="IPR000911">
    <property type="entry name" value="Ribosomal_uL11"/>
</dbReference>
<dbReference type="InterPro" id="IPR006519">
    <property type="entry name" value="Ribosomal_uL11_bac-typ"/>
</dbReference>
<dbReference type="InterPro" id="IPR020783">
    <property type="entry name" value="Ribosomal_uL11_C"/>
</dbReference>
<dbReference type="InterPro" id="IPR036769">
    <property type="entry name" value="Ribosomal_uL11_C_sf"/>
</dbReference>
<dbReference type="InterPro" id="IPR020785">
    <property type="entry name" value="Ribosomal_uL11_CS"/>
</dbReference>
<dbReference type="InterPro" id="IPR020784">
    <property type="entry name" value="Ribosomal_uL11_N"/>
</dbReference>
<dbReference type="InterPro" id="IPR036796">
    <property type="entry name" value="Ribosomal_uL11_N_sf"/>
</dbReference>
<dbReference type="NCBIfam" id="TIGR01632">
    <property type="entry name" value="L11_bact"/>
    <property type="match status" value="1"/>
</dbReference>
<dbReference type="PANTHER" id="PTHR11661">
    <property type="entry name" value="60S RIBOSOMAL PROTEIN L12"/>
    <property type="match status" value="1"/>
</dbReference>
<dbReference type="PANTHER" id="PTHR11661:SF1">
    <property type="entry name" value="LARGE RIBOSOMAL SUBUNIT PROTEIN UL11M"/>
    <property type="match status" value="1"/>
</dbReference>
<dbReference type="Pfam" id="PF00298">
    <property type="entry name" value="Ribosomal_L11"/>
    <property type="match status" value="1"/>
</dbReference>
<dbReference type="Pfam" id="PF03946">
    <property type="entry name" value="Ribosomal_L11_N"/>
    <property type="match status" value="1"/>
</dbReference>
<dbReference type="SMART" id="SM00649">
    <property type="entry name" value="RL11"/>
    <property type="match status" value="1"/>
</dbReference>
<dbReference type="SUPFAM" id="SSF54747">
    <property type="entry name" value="Ribosomal L11/L12e N-terminal domain"/>
    <property type="match status" value="1"/>
</dbReference>
<dbReference type="SUPFAM" id="SSF46906">
    <property type="entry name" value="Ribosomal protein L11, C-terminal domain"/>
    <property type="match status" value="1"/>
</dbReference>
<dbReference type="PROSITE" id="PS00359">
    <property type="entry name" value="RIBOSOMAL_L11"/>
    <property type="match status" value="1"/>
</dbReference>
<keyword id="KW-0488">Methylation</keyword>
<keyword id="KW-0687">Ribonucleoprotein</keyword>
<keyword id="KW-0689">Ribosomal protein</keyword>
<keyword id="KW-0694">RNA-binding</keyword>
<keyword id="KW-0699">rRNA-binding</keyword>
<feature type="chain" id="PRO_1000083368" description="Large ribosomal subunit protein uL11">
    <location>
        <begin position="1"/>
        <end position="142"/>
    </location>
</feature>
<comment type="function">
    <text evidence="1">Forms part of the ribosomal stalk which helps the ribosome interact with GTP-bound translation factors.</text>
</comment>
<comment type="subunit">
    <text evidence="1">Part of the ribosomal stalk of the 50S ribosomal subunit. Interacts with L10 and the large rRNA to form the base of the stalk. L10 forms an elongated spine to which L12 dimers bind in a sequential fashion forming a multimeric L10(L12)X complex.</text>
</comment>
<comment type="PTM">
    <text evidence="1">One or more lysine residues are methylated.</text>
</comment>
<comment type="similarity">
    <text evidence="1">Belongs to the universal ribosomal protein uL11 family.</text>
</comment>
<gene>
    <name evidence="1" type="primary">rplK</name>
    <name type="ordered locus">BT_0891</name>
</gene>
<name>RL11_BART1</name>
<accession>A9ISE8</accession>
<reference key="1">
    <citation type="journal article" date="2007" name="Nat. Genet.">
        <title>Genomic analysis of Bartonella identifies type IV secretion systems as host adaptability factors.</title>
        <authorList>
            <person name="Saenz H.L."/>
            <person name="Engel P."/>
            <person name="Stoeckli M.C."/>
            <person name="Lanz C."/>
            <person name="Raddatz G."/>
            <person name="Vayssier-Taussat M."/>
            <person name="Birtles R."/>
            <person name="Schuster S.C."/>
            <person name="Dehio C."/>
        </authorList>
    </citation>
    <scope>NUCLEOTIDE SEQUENCE [LARGE SCALE GENOMIC DNA]</scope>
    <source>
        <strain>CIP 105476 / IBS 506</strain>
    </source>
</reference>
<organism>
    <name type="scientific">Bartonella tribocorum (strain CIP 105476 / IBS 506)</name>
    <dbReference type="NCBI Taxonomy" id="382640"/>
    <lineage>
        <taxon>Bacteria</taxon>
        <taxon>Pseudomonadati</taxon>
        <taxon>Pseudomonadota</taxon>
        <taxon>Alphaproteobacteria</taxon>
        <taxon>Hyphomicrobiales</taxon>
        <taxon>Bartonellaceae</taxon>
        <taxon>Bartonella</taxon>
    </lineage>
</organism>
<protein>
    <recommendedName>
        <fullName evidence="1">Large ribosomal subunit protein uL11</fullName>
    </recommendedName>
    <alternativeName>
        <fullName evidence="2">50S ribosomal protein L11</fullName>
    </alternativeName>
</protein>
<sequence length="142" mass="15176">MAKKSIGQLKLQVPAGAATPSPPIGPALGQRGINIMEFCKAFNAATQEMEKGAPIPVVITYYQDKSFTFSLKTPPVSFFLKKEAQLKSGSKEPGKVSVGSISRDKIRSIAESKMKDLNANDIEAAMRMVEGSARSMGLEVVG</sequence>